<gene>
    <name evidence="1" type="primary">rpsR</name>
    <name type="ordered locus">LPC_1018</name>
</gene>
<keyword id="KW-0687">Ribonucleoprotein</keyword>
<keyword id="KW-0689">Ribosomal protein</keyword>
<keyword id="KW-0694">RNA-binding</keyword>
<keyword id="KW-0699">rRNA-binding</keyword>
<sequence>MSAYFRRKKMCRFSAEGGNEIDYKDINLLKNYITETGKIVPSRITGTQTRFQRQLAKAIKHARFIGLLPYCDSHR</sequence>
<accession>A5IC89</accession>
<dbReference type="EMBL" id="CP000675">
    <property type="protein sequence ID" value="ABQ54989.1"/>
    <property type="molecule type" value="Genomic_DNA"/>
</dbReference>
<dbReference type="RefSeq" id="WP_010947320.1">
    <property type="nucleotide sequence ID" value="NZ_JAPMSS010000002.1"/>
</dbReference>
<dbReference type="SMR" id="A5IC89"/>
<dbReference type="GeneID" id="57035582"/>
<dbReference type="KEGG" id="lpc:LPC_1018"/>
<dbReference type="HOGENOM" id="CLU_148710_2_3_6"/>
<dbReference type="GO" id="GO:0022627">
    <property type="term" value="C:cytosolic small ribosomal subunit"/>
    <property type="evidence" value="ECO:0007669"/>
    <property type="project" value="TreeGrafter"/>
</dbReference>
<dbReference type="GO" id="GO:0070181">
    <property type="term" value="F:small ribosomal subunit rRNA binding"/>
    <property type="evidence" value="ECO:0007669"/>
    <property type="project" value="TreeGrafter"/>
</dbReference>
<dbReference type="GO" id="GO:0003735">
    <property type="term" value="F:structural constituent of ribosome"/>
    <property type="evidence" value="ECO:0007669"/>
    <property type="project" value="InterPro"/>
</dbReference>
<dbReference type="GO" id="GO:0006412">
    <property type="term" value="P:translation"/>
    <property type="evidence" value="ECO:0007669"/>
    <property type="project" value="UniProtKB-UniRule"/>
</dbReference>
<dbReference type="Gene3D" id="4.10.640.10">
    <property type="entry name" value="Ribosomal protein S18"/>
    <property type="match status" value="1"/>
</dbReference>
<dbReference type="HAMAP" id="MF_00270">
    <property type="entry name" value="Ribosomal_bS18"/>
    <property type="match status" value="1"/>
</dbReference>
<dbReference type="InterPro" id="IPR001648">
    <property type="entry name" value="Ribosomal_bS18"/>
</dbReference>
<dbReference type="InterPro" id="IPR018275">
    <property type="entry name" value="Ribosomal_bS18_CS"/>
</dbReference>
<dbReference type="InterPro" id="IPR036870">
    <property type="entry name" value="Ribosomal_bS18_sf"/>
</dbReference>
<dbReference type="NCBIfam" id="TIGR00165">
    <property type="entry name" value="S18"/>
    <property type="match status" value="1"/>
</dbReference>
<dbReference type="PANTHER" id="PTHR13479">
    <property type="entry name" value="30S RIBOSOMAL PROTEIN S18"/>
    <property type="match status" value="1"/>
</dbReference>
<dbReference type="PANTHER" id="PTHR13479:SF40">
    <property type="entry name" value="SMALL RIBOSOMAL SUBUNIT PROTEIN BS18M"/>
    <property type="match status" value="1"/>
</dbReference>
<dbReference type="Pfam" id="PF01084">
    <property type="entry name" value="Ribosomal_S18"/>
    <property type="match status" value="1"/>
</dbReference>
<dbReference type="PRINTS" id="PR00974">
    <property type="entry name" value="RIBOSOMALS18"/>
</dbReference>
<dbReference type="SUPFAM" id="SSF46911">
    <property type="entry name" value="Ribosomal protein S18"/>
    <property type="match status" value="1"/>
</dbReference>
<dbReference type="PROSITE" id="PS00057">
    <property type="entry name" value="RIBOSOMAL_S18"/>
    <property type="match status" value="1"/>
</dbReference>
<organism>
    <name type="scientific">Legionella pneumophila (strain Corby)</name>
    <dbReference type="NCBI Taxonomy" id="400673"/>
    <lineage>
        <taxon>Bacteria</taxon>
        <taxon>Pseudomonadati</taxon>
        <taxon>Pseudomonadota</taxon>
        <taxon>Gammaproteobacteria</taxon>
        <taxon>Legionellales</taxon>
        <taxon>Legionellaceae</taxon>
        <taxon>Legionella</taxon>
    </lineage>
</organism>
<name>RS18_LEGPC</name>
<comment type="function">
    <text evidence="1">Binds as a heterodimer with protein bS6 to the central domain of the 16S rRNA, where it helps stabilize the platform of the 30S subunit.</text>
</comment>
<comment type="subunit">
    <text evidence="1">Part of the 30S ribosomal subunit. Forms a tight heterodimer with protein bS6.</text>
</comment>
<comment type="similarity">
    <text evidence="1">Belongs to the bacterial ribosomal protein bS18 family.</text>
</comment>
<proteinExistence type="inferred from homology"/>
<protein>
    <recommendedName>
        <fullName evidence="1">Small ribosomal subunit protein bS18</fullName>
    </recommendedName>
    <alternativeName>
        <fullName evidence="2">30S ribosomal protein S18</fullName>
    </alternativeName>
</protein>
<reference key="1">
    <citation type="submission" date="2006-11" db="EMBL/GenBank/DDBJ databases">
        <title>Identification and characterization of a new conjugation/ type IVA secretion system (trb/tra) of L. pneumophila Corby localized on a mobile genomic island.</title>
        <authorList>
            <person name="Gloeckner G."/>
            <person name="Albert-Weissenberger C."/>
            <person name="Weinmann E."/>
            <person name="Jacobi S."/>
            <person name="Schunder E."/>
            <person name="Steinert M."/>
            <person name="Buchrieser C."/>
            <person name="Hacker J."/>
            <person name="Heuner K."/>
        </authorList>
    </citation>
    <scope>NUCLEOTIDE SEQUENCE [LARGE SCALE GENOMIC DNA]</scope>
    <source>
        <strain>Corby</strain>
    </source>
</reference>
<feature type="chain" id="PRO_1000003524" description="Small ribosomal subunit protein bS18">
    <location>
        <begin position="1"/>
        <end position="75"/>
    </location>
</feature>
<evidence type="ECO:0000255" key="1">
    <source>
        <dbReference type="HAMAP-Rule" id="MF_00270"/>
    </source>
</evidence>
<evidence type="ECO:0000305" key="2"/>